<comment type="function">
    <text evidence="2">With S4 and S5 plays an important role in translational accuracy.</text>
</comment>
<comment type="function">
    <text evidence="2">Interacts with and stabilizes bases of the 16S rRNA that are involved in tRNA selection in the A site and with the mRNA backbone. Located at the interface of the 30S and 50S subunits, it traverses the body of the 30S subunit contacting proteins on the other side and probably holding the rRNA structure together. The combined cluster of proteins S8, S12 and S17 appears to hold together the shoulder and platform of the 30S subunit.</text>
</comment>
<comment type="subunit">
    <text evidence="2">Part of the 30S ribosomal subunit. Contacts proteins S8 and S17. May interact with IF1 in the 30S initiation complex.</text>
</comment>
<comment type="similarity">
    <text evidence="2">Belongs to the universal ribosomal protein uS12 family.</text>
</comment>
<accession>B2RLZ6</accession>
<sequence length="134" mass="14797">MPTIQQLVRKGRESFADKSKSPALNSCPQRRGVCVRVYTTTPRKPNSAMRKVARVRLTNSKEVNAYIPGEGHNLQEHSIVLVRGGRVKDLPGVRYHIVRGTLDTAGVNGRTQRRSKYGAKRPKPGQAPAAKGKK</sequence>
<evidence type="ECO:0000250" key="1"/>
<evidence type="ECO:0000255" key="2">
    <source>
        <dbReference type="HAMAP-Rule" id="MF_00403"/>
    </source>
</evidence>
<evidence type="ECO:0000256" key="3">
    <source>
        <dbReference type="SAM" id="MobiDB-lite"/>
    </source>
</evidence>
<evidence type="ECO:0000305" key="4"/>
<organism>
    <name type="scientific">Porphyromonas gingivalis (strain ATCC 33277 / DSM 20709 / CIP 103683 / JCM 12257 / NCTC 11834 / 2561)</name>
    <dbReference type="NCBI Taxonomy" id="431947"/>
    <lineage>
        <taxon>Bacteria</taxon>
        <taxon>Pseudomonadati</taxon>
        <taxon>Bacteroidota</taxon>
        <taxon>Bacteroidia</taxon>
        <taxon>Bacteroidales</taxon>
        <taxon>Porphyromonadaceae</taxon>
        <taxon>Porphyromonas</taxon>
    </lineage>
</organism>
<dbReference type="EMBL" id="AP009380">
    <property type="protein sequence ID" value="BAG34391.1"/>
    <property type="molecule type" value="Genomic_DNA"/>
</dbReference>
<dbReference type="RefSeq" id="WP_012458581.1">
    <property type="nucleotide sequence ID" value="NC_010729.1"/>
</dbReference>
<dbReference type="SMR" id="B2RLZ6"/>
<dbReference type="GeneID" id="29257023"/>
<dbReference type="KEGG" id="pgn:PGN_1872"/>
<dbReference type="eggNOG" id="COG0048">
    <property type="taxonomic scope" value="Bacteria"/>
</dbReference>
<dbReference type="HOGENOM" id="CLU_104295_1_2_10"/>
<dbReference type="OrthoDB" id="9802366at2"/>
<dbReference type="BioCyc" id="PGIN431947:G1G2V-2086-MONOMER"/>
<dbReference type="Proteomes" id="UP000008842">
    <property type="component" value="Chromosome"/>
</dbReference>
<dbReference type="GO" id="GO:0015935">
    <property type="term" value="C:small ribosomal subunit"/>
    <property type="evidence" value="ECO:0007669"/>
    <property type="project" value="InterPro"/>
</dbReference>
<dbReference type="GO" id="GO:0019843">
    <property type="term" value="F:rRNA binding"/>
    <property type="evidence" value="ECO:0007669"/>
    <property type="project" value="UniProtKB-UniRule"/>
</dbReference>
<dbReference type="GO" id="GO:0003735">
    <property type="term" value="F:structural constituent of ribosome"/>
    <property type="evidence" value="ECO:0007669"/>
    <property type="project" value="InterPro"/>
</dbReference>
<dbReference type="GO" id="GO:0000049">
    <property type="term" value="F:tRNA binding"/>
    <property type="evidence" value="ECO:0007669"/>
    <property type="project" value="UniProtKB-UniRule"/>
</dbReference>
<dbReference type="GO" id="GO:0006412">
    <property type="term" value="P:translation"/>
    <property type="evidence" value="ECO:0007669"/>
    <property type="project" value="UniProtKB-UniRule"/>
</dbReference>
<dbReference type="CDD" id="cd03368">
    <property type="entry name" value="Ribosomal_S12"/>
    <property type="match status" value="1"/>
</dbReference>
<dbReference type="FunFam" id="2.40.50.140:FF:000001">
    <property type="entry name" value="30S ribosomal protein S12"/>
    <property type="match status" value="1"/>
</dbReference>
<dbReference type="Gene3D" id="2.40.50.140">
    <property type="entry name" value="Nucleic acid-binding proteins"/>
    <property type="match status" value="1"/>
</dbReference>
<dbReference type="HAMAP" id="MF_00403_B">
    <property type="entry name" value="Ribosomal_uS12_B"/>
    <property type="match status" value="1"/>
</dbReference>
<dbReference type="InterPro" id="IPR012340">
    <property type="entry name" value="NA-bd_OB-fold"/>
</dbReference>
<dbReference type="InterPro" id="IPR006032">
    <property type="entry name" value="Ribosomal_uS12"/>
</dbReference>
<dbReference type="InterPro" id="IPR005679">
    <property type="entry name" value="Ribosomal_uS12_bac"/>
</dbReference>
<dbReference type="NCBIfam" id="TIGR00981">
    <property type="entry name" value="rpsL_bact"/>
    <property type="match status" value="1"/>
</dbReference>
<dbReference type="PANTHER" id="PTHR11652">
    <property type="entry name" value="30S RIBOSOMAL PROTEIN S12 FAMILY MEMBER"/>
    <property type="match status" value="1"/>
</dbReference>
<dbReference type="Pfam" id="PF00164">
    <property type="entry name" value="Ribosom_S12_S23"/>
    <property type="match status" value="1"/>
</dbReference>
<dbReference type="PIRSF" id="PIRSF002133">
    <property type="entry name" value="Ribosomal_S12/S23"/>
    <property type="match status" value="1"/>
</dbReference>
<dbReference type="PRINTS" id="PR01034">
    <property type="entry name" value="RIBOSOMALS12"/>
</dbReference>
<dbReference type="SUPFAM" id="SSF50249">
    <property type="entry name" value="Nucleic acid-binding proteins"/>
    <property type="match status" value="1"/>
</dbReference>
<dbReference type="PROSITE" id="PS00055">
    <property type="entry name" value="RIBOSOMAL_S12"/>
    <property type="match status" value="1"/>
</dbReference>
<reference key="1">
    <citation type="journal article" date="2008" name="DNA Res.">
        <title>Determination of the genome sequence of Porphyromonas gingivalis strain ATCC 33277 and genomic comparison with strain W83 revealed extensive genome rearrangements in P. gingivalis.</title>
        <authorList>
            <person name="Naito M."/>
            <person name="Hirakawa H."/>
            <person name="Yamashita A."/>
            <person name="Ohara N."/>
            <person name="Shoji M."/>
            <person name="Yukitake H."/>
            <person name="Nakayama K."/>
            <person name="Toh H."/>
            <person name="Yoshimura F."/>
            <person name="Kuhara S."/>
            <person name="Hattori M."/>
            <person name="Hayashi T."/>
            <person name="Nakayama K."/>
        </authorList>
    </citation>
    <scope>NUCLEOTIDE SEQUENCE [LARGE SCALE GENOMIC DNA]</scope>
    <source>
        <strain>ATCC 33277 / DSM 20709 / CIP 103683 / JCM 12257 / NCTC 11834 / 2561</strain>
    </source>
</reference>
<gene>
    <name evidence="2" type="primary">rpsL</name>
    <name type="ordered locus">PGN_1872</name>
</gene>
<proteinExistence type="inferred from homology"/>
<feature type="chain" id="PRO_1000194207" description="Small ribosomal subunit protein uS12">
    <location>
        <begin position="1"/>
        <end position="134"/>
    </location>
</feature>
<feature type="region of interest" description="Disordered" evidence="3">
    <location>
        <begin position="1"/>
        <end position="27"/>
    </location>
</feature>
<feature type="region of interest" description="Disordered" evidence="3">
    <location>
        <begin position="103"/>
        <end position="134"/>
    </location>
</feature>
<feature type="compositionally biased region" description="Basic and acidic residues" evidence="3">
    <location>
        <begin position="10"/>
        <end position="20"/>
    </location>
</feature>
<feature type="compositionally biased region" description="Basic residues" evidence="3">
    <location>
        <begin position="111"/>
        <end position="123"/>
    </location>
</feature>
<feature type="compositionally biased region" description="Low complexity" evidence="3">
    <location>
        <begin position="124"/>
        <end position="134"/>
    </location>
</feature>
<feature type="modified residue" description="3-methylthioaspartic acid" evidence="1">
    <location>
        <position position="89"/>
    </location>
</feature>
<protein>
    <recommendedName>
        <fullName evidence="2">Small ribosomal subunit protein uS12</fullName>
    </recommendedName>
    <alternativeName>
        <fullName evidence="4">30S ribosomal protein S12</fullName>
    </alternativeName>
</protein>
<keyword id="KW-0488">Methylation</keyword>
<keyword id="KW-0687">Ribonucleoprotein</keyword>
<keyword id="KW-0689">Ribosomal protein</keyword>
<keyword id="KW-0694">RNA-binding</keyword>
<keyword id="KW-0699">rRNA-binding</keyword>
<keyword id="KW-0820">tRNA-binding</keyword>
<name>RS12_PORG3</name>